<proteinExistence type="inferred from homology"/>
<gene>
    <name type="primary">atpFH</name>
    <name type="synonym">atpF</name>
    <name type="synonym">atpH</name>
    <name type="ordered locus">JTY_1342</name>
</gene>
<comment type="function">
    <text evidence="1">F(1)F(0) ATP synthase produces ATP from ADP in the presence of a proton or sodium gradient. F-type ATPases consist of two structural domains, F(1) containing the extramembraneous catalytic core and F(0) containing the membrane proton channel, linked together by a central stalk and a peripheral stalk. During catalysis, ATP synthesis in the catalytic domain of F(1) is coupled via a rotary mechanism of the central stalk subunits to proton translocation (By similarity).</text>
</comment>
<comment type="function">
    <text evidence="1">This fusion protein includes a component of the F(0) channel (subunit b) and of the F(1) subunit (subunit delta). Two copies of subunit b and one of delta together form the peripheral 'stator' stalk which links F(1) to F(0) (By similarity).</text>
</comment>
<comment type="subunit">
    <text evidence="1">F-type ATPases have 2 components, F(1) - the catalytic core - and F(0) - the membrane proton channel. F(1) has five subunits: alpha(3), beta(3), gamma(1), delta(1), epsilon(1). F(0) has three main subunits: a(1), b(2) and c(10-14). The alpha and beta chains form an alternating ring which encloses part of the gamma chain. F(1) is attached to F(0) by a central stalk formed by the gamma and epsilon chains, while a peripheral stalk is formed by the delta and b chains (By similarity).</text>
</comment>
<comment type="subcellular location">
    <subcellularLocation>
        <location evidence="1">Cell membrane</location>
        <topology evidence="1">Single-pass membrane protein</topology>
    </subcellularLocation>
</comment>
<comment type="similarity">
    <text evidence="3">In the N-terminal section; belongs to the ATPase B chain family.</text>
</comment>
<comment type="similarity">
    <text evidence="3">In the C-terminal section; belongs to the ATPase delta chain family.</text>
</comment>
<sequence length="446" mass="48806">MSTFIGQLFGFAVIVYLVWRFIVPLVGRLMSARQDTVRQQLADAAAAADRLAEASQAHTKALEDAKSEAHRVVEEARTDAERIAEQLEAQADVEAERIKMQGARQVDLIRAQLTRQLRLELGHESVRQARELVRNHVADQAQQSATVDRFLDQLDAMAPATADVDYPLLAKMRSASRRALTSLVDWFGTMAQDLDHQGLTTLAGELVSVARLLDREAVVTRYLTVPAEDATPRIRLIERLVSGKVGAPTLEVLRTAVSKRWSANSDLIDAIEHVSRQALLELAERAGQVDEVEDQLFRFSRILDVQPRLAILLGDCAVPAEGRVRLLRKVLERADSTVNPVVVALLSHTVELLRGQAVEEAVLFLAEVAVARRGEIVAQVGAAAELSDAQRTRLTEVLSRIYGHPVTVQLHIDAALLGGLSIAVGDEVIDGTLSSRLAAAEARLPD</sequence>
<reference key="1">
    <citation type="journal article" date="2009" name="Vaccine">
        <title>Whole genome sequence analysis of Mycobacterium bovis bacillus Calmette-Guerin (BCG) Tokyo 172: a comparative study of BCG vaccine substrains.</title>
        <authorList>
            <person name="Seki M."/>
            <person name="Honda I."/>
            <person name="Fujita I."/>
            <person name="Yano I."/>
            <person name="Yamamoto S."/>
            <person name="Koyama A."/>
        </authorList>
    </citation>
    <scope>NUCLEOTIDE SEQUENCE [LARGE SCALE GENOMIC DNA]</scope>
    <source>
        <strain>BCG / Tokyo 172 / ATCC 35737 / TMC 1019</strain>
    </source>
</reference>
<dbReference type="EMBL" id="AP010918">
    <property type="protein sequence ID" value="BAH25630.1"/>
    <property type="molecule type" value="Genomic_DNA"/>
</dbReference>
<dbReference type="RefSeq" id="WP_003406697.1">
    <property type="nucleotide sequence ID" value="NZ_CP014566.1"/>
</dbReference>
<dbReference type="SMR" id="C1AMV1"/>
<dbReference type="KEGG" id="mbt:JTY_1342"/>
<dbReference type="HOGENOM" id="CLU_722652_0_0_11"/>
<dbReference type="GO" id="GO:0005886">
    <property type="term" value="C:plasma membrane"/>
    <property type="evidence" value="ECO:0007669"/>
    <property type="project" value="UniProtKB-SubCell"/>
</dbReference>
<dbReference type="GO" id="GO:0045259">
    <property type="term" value="C:proton-transporting ATP synthase complex"/>
    <property type="evidence" value="ECO:0007669"/>
    <property type="project" value="UniProtKB-KW"/>
</dbReference>
<dbReference type="GO" id="GO:0046933">
    <property type="term" value="F:proton-transporting ATP synthase activity, rotational mechanism"/>
    <property type="evidence" value="ECO:0007669"/>
    <property type="project" value="UniProtKB-UniRule"/>
</dbReference>
<dbReference type="CDD" id="cd06503">
    <property type="entry name" value="ATP-synt_Fo_b"/>
    <property type="match status" value="1"/>
</dbReference>
<dbReference type="Gene3D" id="1.20.5.620">
    <property type="entry name" value="F1F0 ATP synthase subunit B, membrane domain"/>
    <property type="match status" value="1"/>
</dbReference>
<dbReference type="Gene3D" id="1.10.520.20">
    <property type="entry name" value="N-terminal domain of the delta subunit of the F1F0-ATP synthase"/>
    <property type="match status" value="1"/>
</dbReference>
<dbReference type="HAMAP" id="MF_01398">
    <property type="entry name" value="ATP_synth_b_bprime"/>
    <property type="match status" value="1"/>
</dbReference>
<dbReference type="HAMAP" id="MF_01416">
    <property type="entry name" value="ATP_synth_delta_bact"/>
    <property type="match status" value="1"/>
</dbReference>
<dbReference type="InterPro" id="IPR028987">
    <property type="entry name" value="ATP_synth_B-like_membr_sf"/>
</dbReference>
<dbReference type="InterPro" id="IPR002146">
    <property type="entry name" value="ATP_synth_b/b'su_bac/chlpt"/>
</dbReference>
<dbReference type="InterPro" id="IPR005864">
    <property type="entry name" value="ATP_synth_F0_bsu_bac"/>
</dbReference>
<dbReference type="InterPro" id="IPR026015">
    <property type="entry name" value="ATP_synth_OSCP/delta_N_sf"/>
</dbReference>
<dbReference type="InterPro" id="IPR000711">
    <property type="entry name" value="ATPase_OSCP/dsu"/>
</dbReference>
<dbReference type="NCBIfam" id="TIGR01144">
    <property type="entry name" value="ATP_synt_b"/>
    <property type="match status" value="1"/>
</dbReference>
<dbReference type="NCBIfam" id="TIGR01145">
    <property type="entry name" value="ATP_synt_delta"/>
    <property type="match status" value="1"/>
</dbReference>
<dbReference type="NCBIfam" id="NF009961">
    <property type="entry name" value="PRK13428.1"/>
    <property type="match status" value="1"/>
</dbReference>
<dbReference type="NCBIfam" id="NF009967">
    <property type="entry name" value="PRK13430.1"/>
    <property type="match status" value="1"/>
</dbReference>
<dbReference type="PANTHER" id="PTHR11910">
    <property type="entry name" value="ATP SYNTHASE DELTA CHAIN"/>
    <property type="match status" value="1"/>
</dbReference>
<dbReference type="Pfam" id="PF00430">
    <property type="entry name" value="ATP-synt_B"/>
    <property type="match status" value="1"/>
</dbReference>
<dbReference type="Pfam" id="PF00213">
    <property type="entry name" value="OSCP"/>
    <property type="match status" value="1"/>
</dbReference>
<dbReference type="PRINTS" id="PR00125">
    <property type="entry name" value="ATPASEDELTA"/>
</dbReference>
<dbReference type="SUPFAM" id="SSF81573">
    <property type="entry name" value="F1F0 ATP synthase subunit B, membrane domain"/>
    <property type="match status" value="1"/>
</dbReference>
<keyword id="KW-0066">ATP synthesis</keyword>
<keyword id="KW-1003">Cell membrane</keyword>
<keyword id="KW-0138">CF(0)</keyword>
<keyword id="KW-0139">CF(1)</keyword>
<keyword id="KW-0375">Hydrogen ion transport</keyword>
<keyword id="KW-0406">Ion transport</keyword>
<keyword id="KW-0472">Membrane</keyword>
<keyword id="KW-0511">Multifunctional enzyme</keyword>
<keyword id="KW-0812">Transmembrane</keyword>
<keyword id="KW-1133">Transmembrane helix</keyword>
<keyword id="KW-0813">Transport</keyword>
<evidence type="ECO:0000250" key="1"/>
<evidence type="ECO:0000255" key="2"/>
<evidence type="ECO:0000305" key="3"/>
<feature type="chain" id="PRO_0000382046" description="ATP synthase subunit b-delta">
    <location>
        <begin position="1"/>
        <end position="446"/>
    </location>
</feature>
<feature type="transmembrane region" description="Helical" evidence="2">
    <location>
        <begin position="4"/>
        <end position="24"/>
    </location>
</feature>
<feature type="region of interest" description="ATP synthase subunit b">
    <location>
        <begin position="1"/>
        <end position="168"/>
    </location>
</feature>
<feature type="region of interest" description="ATP synthase subunit delta">
    <location>
        <begin position="169"/>
        <end position="446"/>
    </location>
</feature>
<name>ATPFD_MYCBT</name>
<organism>
    <name type="scientific">Mycobacterium bovis (strain BCG / Tokyo 172 / ATCC 35737 / TMC 1019)</name>
    <dbReference type="NCBI Taxonomy" id="561275"/>
    <lineage>
        <taxon>Bacteria</taxon>
        <taxon>Bacillati</taxon>
        <taxon>Actinomycetota</taxon>
        <taxon>Actinomycetes</taxon>
        <taxon>Mycobacteriales</taxon>
        <taxon>Mycobacteriaceae</taxon>
        <taxon>Mycobacterium</taxon>
        <taxon>Mycobacterium tuberculosis complex</taxon>
    </lineage>
</organism>
<accession>C1AMV1</accession>
<protein>
    <recommendedName>
        <fullName>ATP synthase subunit b-delta</fullName>
    </recommendedName>
    <domain>
        <recommendedName>
            <fullName>ATP synthase subunit b</fullName>
        </recommendedName>
        <alternativeName>
            <fullName>ATP synthase F(0) sector subunit b 2</fullName>
        </alternativeName>
        <alternativeName>
            <fullName>ATPase subunit I 2</fullName>
        </alternativeName>
        <alternativeName>
            <fullName>F-type ATPase subunit b 2</fullName>
            <shortName>F-ATPase subunit b 2</shortName>
        </alternativeName>
    </domain>
    <domain>
        <recommendedName>
            <fullName>ATP synthase subunit delta</fullName>
        </recommendedName>
        <alternativeName>
            <fullName>ATP synthase F(1) sector subunit delta</fullName>
        </alternativeName>
        <alternativeName>
            <fullName>F-type ATPase subunit delta</fullName>
            <shortName>F-ATPase subunit delta</shortName>
        </alternativeName>
    </domain>
</protein>